<comment type="similarity">
    <text evidence="1">Belongs to the PPR family. P subfamily.</text>
</comment>
<comment type="online information" name="Pentatricopeptide repeat proteins">
    <link uri="https://ppr.plantenergy.uwa.edu.au"/>
</comment>
<organism>
    <name type="scientific">Arabidopsis thaliana</name>
    <name type="common">Mouse-ear cress</name>
    <dbReference type="NCBI Taxonomy" id="3702"/>
    <lineage>
        <taxon>Eukaryota</taxon>
        <taxon>Viridiplantae</taxon>
        <taxon>Streptophyta</taxon>
        <taxon>Embryophyta</taxon>
        <taxon>Tracheophyta</taxon>
        <taxon>Spermatophyta</taxon>
        <taxon>Magnoliopsida</taxon>
        <taxon>eudicotyledons</taxon>
        <taxon>Gunneridae</taxon>
        <taxon>Pentapetalae</taxon>
        <taxon>rosids</taxon>
        <taxon>malvids</taxon>
        <taxon>Brassicales</taxon>
        <taxon>Brassicaceae</taxon>
        <taxon>Camelineae</taxon>
        <taxon>Arabidopsis</taxon>
    </lineage>
</organism>
<feature type="chain" id="PRO_0000363546" description="Pentatricopeptide repeat-containing protein At5g40400">
    <location>
        <begin position="1"/>
        <end position="610"/>
    </location>
</feature>
<feature type="repeat" description="PPR 1">
    <location>
        <begin position="165"/>
        <end position="199"/>
    </location>
</feature>
<feature type="repeat" description="PPR 2">
    <location>
        <begin position="200"/>
        <end position="234"/>
    </location>
</feature>
<feature type="repeat" description="PPR 3">
    <location>
        <begin position="235"/>
        <end position="269"/>
    </location>
</feature>
<feature type="repeat" description="PPR 4">
    <location>
        <begin position="270"/>
        <end position="304"/>
    </location>
</feature>
<feature type="repeat" description="PPR 5">
    <location>
        <begin position="305"/>
        <end position="339"/>
    </location>
</feature>
<feature type="repeat" description="PPR 6">
    <location>
        <begin position="340"/>
        <end position="374"/>
    </location>
</feature>
<feature type="repeat" description="PPR 7">
    <location>
        <begin position="375"/>
        <end position="409"/>
    </location>
</feature>
<feature type="repeat" description="PPR 8">
    <location>
        <begin position="410"/>
        <end position="445"/>
    </location>
</feature>
<feature type="repeat" description="PPR 9">
    <location>
        <begin position="446"/>
        <end position="480"/>
    </location>
</feature>
<feature type="repeat" description="PPR 10">
    <location>
        <begin position="481"/>
        <end position="515"/>
    </location>
</feature>
<feature type="repeat" description="PPR 11">
    <location>
        <begin position="516"/>
        <end position="546"/>
    </location>
</feature>
<feature type="repeat" description="PPR 12">
    <location>
        <begin position="551"/>
        <end position="586"/>
    </location>
</feature>
<gene>
    <name type="ordered locus">At5g40400</name>
    <name type="ORF">MPO12.110</name>
</gene>
<keyword id="KW-1185">Reference proteome</keyword>
<keyword id="KW-0677">Repeat</keyword>
<evidence type="ECO:0000305" key="1"/>
<dbReference type="EMBL" id="AB006702">
    <property type="protein sequence ID" value="BAB11596.1"/>
    <property type="molecule type" value="Genomic_DNA"/>
</dbReference>
<dbReference type="EMBL" id="CP002688">
    <property type="protein sequence ID" value="AED94543.1"/>
    <property type="molecule type" value="Genomic_DNA"/>
</dbReference>
<dbReference type="EMBL" id="AK227121">
    <property type="protein sequence ID" value="BAE99171.1"/>
    <property type="molecule type" value="mRNA"/>
</dbReference>
<dbReference type="RefSeq" id="NP_198856.2">
    <property type="nucleotide sequence ID" value="NM_123404.3"/>
</dbReference>
<dbReference type="SMR" id="Q9FND8"/>
<dbReference type="FunCoup" id="Q9FND8">
    <property type="interactions" value="156"/>
</dbReference>
<dbReference type="iPTMnet" id="Q9FND8"/>
<dbReference type="PaxDb" id="3702-AT5G40400.1"/>
<dbReference type="EnsemblPlants" id="AT5G40400.1">
    <property type="protein sequence ID" value="AT5G40400.1"/>
    <property type="gene ID" value="AT5G40400"/>
</dbReference>
<dbReference type="GeneID" id="834038"/>
<dbReference type="Gramene" id="AT5G40400.1">
    <property type="protein sequence ID" value="AT5G40400.1"/>
    <property type="gene ID" value="AT5G40400"/>
</dbReference>
<dbReference type="KEGG" id="ath:AT5G40400"/>
<dbReference type="Araport" id="AT5G40400"/>
<dbReference type="TAIR" id="AT5G40400"/>
<dbReference type="eggNOG" id="KOG4197">
    <property type="taxonomic scope" value="Eukaryota"/>
</dbReference>
<dbReference type="HOGENOM" id="CLU_002706_49_12_1"/>
<dbReference type="InParanoid" id="Q9FND8"/>
<dbReference type="OrthoDB" id="185373at2759"/>
<dbReference type="PhylomeDB" id="Q9FND8"/>
<dbReference type="PRO" id="PR:Q9FND8"/>
<dbReference type="Proteomes" id="UP000006548">
    <property type="component" value="Chromosome 5"/>
</dbReference>
<dbReference type="ExpressionAtlas" id="Q9FND8">
    <property type="expression patterns" value="baseline and differential"/>
</dbReference>
<dbReference type="Gene3D" id="1.25.40.10">
    <property type="entry name" value="Tetratricopeptide repeat domain"/>
    <property type="match status" value="5"/>
</dbReference>
<dbReference type="InterPro" id="IPR002885">
    <property type="entry name" value="Pentatricopeptide_rpt"/>
</dbReference>
<dbReference type="InterPro" id="IPR050667">
    <property type="entry name" value="PPR-containing_protein"/>
</dbReference>
<dbReference type="InterPro" id="IPR011990">
    <property type="entry name" value="TPR-like_helical_dom_sf"/>
</dbReference>
<dbReference type="NCBIfam" id="TIGR00756">
    <property type="entry name" value="PPR"/>
    <property type="match status" value="8"/>
</dbReference>
<dbReference type="PANTHER" id="PTHR47939">
    <property type="entry name" value="MEMBRANE-ASSOCIATED SALT-INDUCIBLE PROTEIN-LIKE"/>
    <property type="match status" value="1"/>
</dbReference>
<dbReference type="PANTHER" id="PTHR47939:SF13">
    <property type="entry name" value="OS03G0201400 PROTEIN"/>
    <property type="match status" value="1"/>
</dbReference>
<dbReference type="Pfam" id="PF01535">
    <property type="entry name" value="PPR"/>
    <property type="match status" value="4"/>
</dbReference>
<dbReference type="Pfam" id="PF13041">
    <property type="entry name" value="PPR_2"/>
    <property type="match status" value="3"/>
</dbReference>
<dbReference type="PROSITE" id="PS51375">
    <property type="entry name" value="PPR"/>
    <property type="match status" value="13"/>
</dbReference>
<accession>Q9FND8</accession>
<proteinExistence type="evidence at transcript level"/>
<reference key="1">
    <citation type="journal article" date="1997" name="DNA Res.">
        <title>Structural analysis of Arabidopsis thaliana chromosome 5. II. Sequence features of the regions of 1,044,062 bp covered by thirteen physically assigned P1 clones.</title>
        <authorList>
            <person name="Kotani H."/>
            <person name="Nakamura Y."/>
            <person name="Sato S."/>
            <person name="Kaneko T."/>
            <person name="Asamizu E."/>
            <person name="Miyajima N."/>
            <person name="Tabata S."/>
        </authorList>
    </citation>
    <scope>NUCLEOTIDE SEQUENCE [LARGE SCALE GENOMIC DNA]</scope>
    <source>
        <strain>cv. Columbia</strain>
    </source>
</reference>
<reference key="2">
    <citation type="journal article" date="2017" name="Plant J.">
        <title>Araport11: a complete reannotation of the Arabidopsis thaliana reference genome.</title>
        <authorList>
            <person name="Cheng C.Y."/>
            <person name="Krishnakumar V."/>
            <person name="Chan A.P."/>
            <person name="Thibaud-Nissen F."/>
            <person name="Schobel S."/>
            <person name="Town C.D."/>
        </authorList>
    </citation>
    <scope>GENOME REANNOTATION</scope>
    <source>
        <strain>cv. Columbia</strain>
    </source>
</reference>
<reference key="3">
    <citation type="submission" date="2006-07" db="EMBL/GenBank/DDBJ databases">
        <title>Large-scale analysis of RIKEN Arabidopsis full-length (RAFL) cDNAs.</title>
        <authorList>
            <person name="Totoki Y."/>
            <person name="Seki M."/>
            <person name="Ishida J."/>
            <person name="Nakajima M."/>
            <person name="Enju A."/>
            <person name="Kamiya A."/>
            <person name="Narusaka M."/>
            <person name="Shin-i T."/>
            <person name="Nakagawa M."/>
            <person name="Sakamoto N."/>
            <person name="Oishi K."/>
            <person name="Kohara Y."/>
            <person name="Kobayashi M."/>
            <person name="Toyoda A."/>
            <person name="Sakaki Y."/>
            <person name="Sakurai T."/>
            <person name="Iida K."/>
            <person name="Akiyama K."/>
            <person name="Satou M."/>
            <person name="Toyoda T."/>
            <person name="Konagaya A."/>
            <person name="Carninci P."/>
            <person name="Kawai J."/>
            <person name="Hayashizaki Y."/>
            <person name="Shinozaki K."/>
        </authorList>
    </citation>
    <scope>NUCLEOTIDE SEQUENCE [LARGE SCALE MRNA]</scope>
    <source>
        <strain>cv. Columbia</strain>
    </source>
</reference>
<reference key="4">
    <citation type="journal article" date="2004" name="Plant Cell">
        <title>Genome-wide analysis of Arabidopsis pentatricopeptide repeat proteins reveals their essential role in organelle biogenesis.</title>
        <authorList>
            <person name="Lurin C."/>
            <person name="Andres C."/>
            <person name="Aubourg S."/>
            <person name="Bellaoui M."/>
            <person name="Bitton F."/>
            <person name="Bruyere C."/>
            <person name="Caboche M."/>
            <person name="Debast C."/>
            <person name="Gualberto J."/>
            <person name="Hoffmann B."/>
            <person name="Lecharny A."/>
            <person name="Le Ret M."/>
            <person name="Martin-Magniette M.-L."/>
            <person name="Mireau H."/>
            <person name="Peeters N."/>
            <person name="Renou J.-P."/>
            <person name="Szurek B."/>
            <person name="Taconnat L."/>
            <person name="Small I."/>
        </authorList>
    </citation>
    <scope>GENE FAMILY</scope>
</reference>
<sequence length="610" mass="70188">MKNLVSNLRFFSSYSSSIVPRCSNIPKPILNPLYNLLPQSQNPSKIVDVICSTLNHSDYSVLLPNLRDEVKSLIPHLGYPEISRVLLRFQSDASRAITFFKWVKFDLGKRPNVGNYCLLLHILVSSKKFPLAMQFLCELIELTSKKEEVDVFRVLVSATDECNWDPVVFDMLVKGYLKLGLVEEGFRVFREVLDSGFSVSVVTCNHLLNGLLKLDLMEDCWQVYSVMCRVGIHPNTYTFNILTNVFCNDSNFREVDDFLEKMEEEGFEPDLVTYNTLVSSYCRRGRLKEAFYLYKIMYRRRVVPDLVTYTSLIKGLCKDGRVREAHQTFHRMVDRGIKPDCMSYNTLIYAYCKEGMMQQSKKLLHEMLGNSVVPDRFTCKVIVEGFVREGRLLSAVNFVVELRRLKVDIPFEVCDFLIVSLCQEGKPFAAKHLLDRIIEEEGHEAKPETYNNLIESLSRCDAIEEALVLKGKLKNQNQVLDAKTYRALIGCLCRIGRNREAESLMAEMFDSEVKPDSFICGALVYGYCKELDFDKAERLLSLFAMEFRIFDPESYNSLVKAVCETGCGYKKALELQERMQRLGFVPNRLTCKYLIQVLEQPSLPNHLPEN</sequence>
<name>PP409_ARATH</name>
<protein>
    <recommendedName>
        <fullName>Pentatricopeptide repeat-containing protein At5g40400</fullName>
    </recommendedName>
</protein>